<protein>
    <recommendedName>
        <fullName evidence="1">Small ribosomal subunit protein uS3</fullName>
    </recommendedName>
    <alternativeName>
        <fullName evidence="2">30S ribosomal protein S3</fullName>
    </alternativeName>
</protein>
<comment type="function">
    <text evidence="1">Binds the lower part of the 30S subunit head. Binds mRNA in the 70S ribosome, positioning it for translation.</text>
</comment>
<comment type="subunit">
    <text evidence="1">Part of the 30S ribosomal subunit. Forms a tight complex with proteins S10 and S14.</text>
</comment>
<comment type="similarity">
    <text evidence="1">Belongs to the universal ribosomal protein uS3 family.</text>
</comment>
<reference key="1">
    <citation type="journal article" date="2011" name="J. Bacteriol.">
        <title>Whole-genome sequences of thirteen isolates of Borrelia burgdorferi.</title>
        <authorList>
            <person name="Schutzer S.E."/>
            <person name="Fraser-Liggett C.M."/>
            <person name="Casjens S.R."/>
            <person name="Qiu W.G."/>
            <person name="Dunn J.J."/>
            <person name="Mongodin E.F."/>
            <person name="Luft B.J."/>
        </authorList>
    </citation>
    <scope>NUCLEOTIDE SEQUENCE [LARGE SCALE GENOMIC DNA]</scope>
    <source>
        <strain>ZS7</strain>
    </source>
</reference>
<evidence type="ECO:0000255" key="1">
    <source>
        <dbReference type="HAMAP-Rule" id="MF_01309"/>
    </source>
</evidence>
<evidence type="ECO:0000305" key="2"/>
<name>RS3_BORBZ</name>
<dbReference type="EMBL" id="CP001205">
    <property type="protein sequence ID" value="ACK75173.1"/>
    <property type="molecule type" value="Genomic_DNA"/>
</dbReference>
<dbReference type="RefSeq" id="WP_002656551.1">
    <property type="nucleotide sequence ID" value="NC_011728.1"/>
</dbReference>
<dbReference type="SMR" id="B7J249"/>
<dbReference type="GeneID" id="56567919"/>
<dbReference type="KEGG" id="bbz:BbuZS7_0495"/>
<dbReference type="HOGENOM" id="CLU_058591_0_2_12"/>
<dbReference type="Proteomes" id="UP000006901">
    <property type="component" value="Chromosome"/>
</dbReference>
<dbReference type="GO" id="GO:0022627">
    <property type="term" value="C:cytosolic small ribosomal subunit"/>
    <property type="evidence" value="ECO:0007669"/>
    <property type="project" value="TreeGrafter"/>
</dbReference>
<dbReference type="GO" id="GO:0003729">
    <property type="term" value="F:mRNA binding"/>
    <property type="evidence" value="ECO:0007669"/>
    <property type="project" value="UniProtKB-UniRule"/>
</dbReference>
<dbReference type="GO" id="GO:0019843">
    <property type="term" value="F:rRNA binding"/>
    <property type="evidence" value="ECO:0007669"/>
    <property type="project" value="UniProtKB-UniRule"/>
</dbReference>
<dbReference type="GO" id="GO:0003735">
    <property type="term" value="F:structural constituent of ribosome"/>
    <property type="evidence" value="ECO:0007669"/>
    <property type="project" value="InterPro"/>
</dbReference>
<dbReference type="GO" id="GO:0006412">
    <property type="term" value="P:translation"/>
    <property type="evidence" value="ECO:0007669"/>
    <property type="project" value="UniProtKB-UniRule"/>
</dbReference>
<dbReference type="CDD" id="cd02412">
    <property type="entry name" value="KH-II_30S_S3"/>
    <property type="match status" value="1"/>
</dbReference>
<dbReference type="FunFam" id="3.30.300.20:FF:000001">
    <property type="entry name" value="30S ribosomal protein S3"/>
    <property type="match status" value="1"/>
</dbReference>
<dbReference type="Gene3D" id="3.30.300.20">
    <property type="match status" value="1"/>
</dbReference>
<dbReference type="Gene3D" id="3.30.1140.32">
    <property type="entry name" value="Ribosomal protein S3, C-terminal domain"/>
    <property type="match status" value="1"/>
</dbReference>
<dbReference type="HAMAP" id="MF_01309_B">
    <property type="entry name" value="Ribosomal_uS3_B"/>
    <property type="match status" value="1"/>
</dbReference>
<dbReference type="InterPro" id="IPR004087">
    <property type="entry name" value="KH_dom"/>
</dbReference>
<dbReference type="InterPro" id="IPR015946">
    <property type="entry name" value="KH_dom-like_a/b"/>
</dbReference>
<dbReference type="InterPro" id="IPR004044">
    <property type="entry name" value="KH_dom_type_2"/>
</dbReference>
<dbReference type="InterPro" id="IPR009019">
    <property type="entry name" value="KH_sf_prok-type"/>
</dbReference>
<dbReference type="InterPro" id="IPR036419">
    <property type="entry name" value="Ribosomal_S3_C_sf"/>
</dbReference>
<dbReference type="InterPro" id="IPR005704">
    <property type="entry name" value="Ribosomal_uS3_bac-typ"/>
</dbReference>
<dbReference type="InterPro" id="IPR001351">
    <property type="entry name" value="Ribosomal_uS3_C"/>
</dbReference>
<dbReference type="InterPro" id="IPR018280">
    <property type="entry name" value="Ribosomal_uS3_CS"/>
</dbReference>
<dbReference type="NCBIfam" id="TIGR01009">
    <property type="entry name" value="rpsC_bact"/>
    <property type="match status" value="1"/>
</dbReference>
<dbReference type="PANTHER" id="PTHR11760">
    <property type="entry name" value="30S/40S RIBOSOMAL PROTEIN S3"/>
    <property type="match status" value="1"/>
</dbReference>
<dbReference type="PANTHER" id="PTHR11760:SF19">
    <property type="entry name" value="SMALL RIBOSOMAL SUBUNIT PROTEIN US3C"/>
    <property type="match status" value="1"/>
</dbReference>
<dbReference type="Pfam" id="PF07650">
    <property type="entry name" value="KH_2"/>
    <property type="match status" value="1"/>
</dbReference>
<dbReference type="Pfam" id="PF00189">
    <property type="entry name" value="Ribosomal_S3_C"/>
    <property type="match status" value="1"/>
</dbReference>
<dbReference type="SMART" id="SM00322">
    <property type="entry name" value="KH"/>
    <property type="match status" value="1"/>
</dbReference>
<dbReference type="SUPFAM" id="SSF54814">
    <property type="entry name" value="Prokaryotic type KH domain (KH-domain type II)"/>
    <property type="match status" value="1"/>
</dbReference>
<dbReference type="SUPFAM" id="SSF54821">
    <property type="entry name" value="Ribosomal protein S3 C-terminal domain"/>
    <property type="match status" value="1"/>
</dbReference>
<dbReference type="PROSITE" id="PS50823">
    <property type="entry name" value="KH_TYPE_2"/>
    <property type="match status" value="1"/>
</dbReference>
<dbReference type="PROSITE" id="PS00548">
    <property type="entry name" value="RIBOSOMAL_S3"/>
    <property type="match status" value="1"/>
</dbReference>
<feature type="chain" id="PRO_1000140924" description="Small ribosomal subunit protein uS3">
    <location>
        <begin position="1"/>
        <end position="293"/>
    </location>
</feature>
<feature type="domain" description="KH type-2" evidence="1">
    <location>
        <begin position="39"/>
        <end position="110"/>
    </location>
</feature>
<proteinExistence type="inferred from homology"/>
<keyword id="KW-0687">Ribonucleoprotein</keyword>
<keyword id="KW-0689">Ribosomal protein</keyword>
<keyword id="KW-0694">RNA-binding</keyword>
<keyword id="KW-0699">rRNA-binding</keyword>
<organism>
    <name type="scientific">Borreliella burgdorferi (strain ZS7)</name>
    <name type="common">Borrelia burgdorferi</name>
    <dbReference type="NCBI Taxonomy" id="445985"/>
    <lineage>
        <taxon>Bacteria</taxon>
        <taxon>Pseudomonadati</taxon>
        <taxon>Spirochaetota</taxon>
        <taxon>Spirochaetia</taxon>
        <taxon>Spirochaetales</taxon>
        <taxon>Borreliaceae</taxon>
        <taxon>Borreliella</taxon>
    </lineage>
</organism>
<accession>B7J249</accession>
<gene>
    <name evidence="1" type="primary">rpsC</name>
    <name type="ordered locus">BbuZS7_0495</name>
</gene>
<sequence>MGQKVHPYSLRVKINKDWKSKWYFDKKLYSAILHEDFLIRREIMKFLKGIKFDISDIEIIRNNPQKVTVVIVTPRPGSVIGLKGSNLEKIGQLLTKKISKKISIKIKEVKRPELDAQIIANGIAKQVENRASYRKVLKSSLSTSMLKGAQGLKIKIAGRLGGAEIARSFEVKEGRVPLHTLRANIDYGFSEAQTTYGIIGVKVWLFKGEVLGRQTNSDAGQVINKKPFRERGDAVKNFDKTLNNREKANEKQTRLLDKKDGLSKDEVDLLNKKKFSASFSKERDDSNEQDIGG</sequence>